<keyword id="KW-0963">Cytoplasm</keyword>
<keyword id="KW-0444">Lipid biosynthesis</keyword>
<keyword id="KW-0443">Lipid metabolism</keyword>
<keyword id="KW-0520">NAD</keyword>
<keyword id="KW-0521">NADP</keyword>
<keyword id="KW-0547">Nucleotide-binding</keyword>
<keyword id="KW-0560">Oxidoreductase</keyword>
<keyword id="KW-0594">Phospholipid biosynthesis</keyword>
<keyword id="KW-1208">Phospholipid metabolism</keyword>
<keyword id="KW-1185">Reference proteome</keyword>
<reference key="1">
    <citation type="submission" date="2003-10" db="EMBL/GenBank/DDBJ databases">
        <title>The complete genome sequence of the alkaliphilic Bacillus clausii KSM-K16.</title>
        <authorList>
            <person name="Takaki Y."/>
            <person name="Kageyama Y."/>
            <person name="Shimamura S."/>
            <person name="Suzuki H."/>
            <person name="Nishi S."/>
            <person name="Hatada Y."/>
            <person name="Kawai S."/>
            <person name="Ito S."/>
            <person name="Horikoshi K."/>
        </authorList>
    </citation>
    <scope>NUCLEOTIDE SEQUENCE [LARGE SCALE GENOMIC DNA]</scope>
    <source>
        <strain>KSM-K16</strain>
    </source>
</reference>
<name>GPDA_SHOC1</name>
<gene>
    <name evidence="1" type="primary">gpsA</name>
    <name type="ordered locus">ABC1878</name>
</gene>
<accession>Q5WGU2</accession>
<comment type="function">
    <text evidence="1">Catalyzes the reduction of the glycolytic intermediate dihydroxyacetone phosphate (DHAP) to sn-glycerol 3-phosphate (G3P), the key precursor for phospholipid synthesis.</text>
</comment>
<comment type="catalytic activity">
    <reaction evidence="1">
        <text>sn-glycerol 3-phosphate + NAD(+) = dihydroxyacetone phosphate + NADH + H(+)</text>
        <dbReference type="Rhea" id="RHEA:11092"/>
        <dbReference type="ChEBI" id="CHEBI:15378"/>
        <dbReference type="ChEBI" id="CHEBI:57540"/>
        <dbReference type="ChEBI" id="CHEBI:57597"/>
        <dbReference type="ChEBI" id="CHEBI:57642"/>
        <dbReference type="ChEBI" id="CHEBI:57945"/>
        <dbReference type="EC" id="1.1.1.94"/>
    </reaction>
    <physiologicalReaction direction="right-to-left" evidence="1">
        <dbReference type="Rhea" id="RHEA:11094"/>
    </physiologicalReaction>
</comment>
<comment type="catalytic activity">
    <reaction evidence="1">
        <text>sn-glycerol 3-phosphate + NADP(+) = dihydroxyacetone phosphate + NADPH + H(+)</text>
        <dbReference type="Rhea" id="RHEA:11096"/>
        <dbReference type="ChEBI" id="CHEBI:15378"/>
        <dbReference type="ChEBI" id="CHEBI:57597"/>
        <dbReference type="ChEBI" id="CHEBI:57642"/>
        <dbReference type="ChEBI" id="CHEBI:57783"/>
        <dbReference type="ChEBI" id="CHEBI:58349"/>
        <dbReference type="EC" id="1.1.1.94"/>
    </reaction>
    <physiologicalReaction direction="right-to-left" evidence="1">
        <dbReference type="Rhea" id="RHEA:11098"/>
    </physiologicalReaction>
</comment>
<comment type="pathway">
    <text evidence="1">Membrane lipid metabolism; glycerophospholipid metabolism.</text>
</comment>
<comment type="subcellular location">
    <subcellularLocation>
        <location evidence="1">Cytoplasm</location>
    </subcellularLocation>
</comment>
<comment type="similarity">
    <text evidence="1">Belongs to the NAD-dependent glycerol-3-phosphate dehydrogenase family.</text>
</comment>
<dbReference type="EC" id="1.1.1.94" evidence="1"/>
<dbReference type="EMBL" id="AP006627">
    <property type="protein sequence ID" value="BAD64413.1"/>
    <property type="molecule type" value="Genomic_DNA"/>
</dbReference>
<dbReference type="RefSeq" id="WP_011246721.1">
    <property type="nucleotide sequence ID" value="NC_006582.1"/>
</dbReference>
<dbReference type="SMR" id="Q5WGU2"/>
<dbReference type="STRING" id="66692.ABC1878"/>
<dbReference type="KEGG" id="bcl:ABC1878"/>
<dbReference type="eggNOG" id="COG0240">
    <property type="taxonomic scope" value="Bacteria"/>
</dbReference>
<dbReference type="HOGENOM" id="CLU_033449_0_2_9"/>
<dbReference type="OrthoDB" id="9812273at2"/>
<dbReference type="UniPathway" id="UPA00940"/>
<dbReference type="Proteomes" id="UP000001168">
    <property type="component" value="Chromosome"/>
</dbReference>
<dbReference type="GO" id="GO:0005829">
    <property type="term" value="C:cytosol"/>
    <property type="evidence" value="ECO:0007669"/>
    <property type="project" value="TreeGrafter"/>
</dbReference>
<dbReference type="GO" id="GO:0047952">
    <property type="term" value="F:glycerol-3-phosphate dehydrogenase [NAD(P)+] activity"/>
    <property type="evidence" value="ECO:0007669"/>
    <property type="project" value="UniProtKB-UniRule"/>
</dbReference>
<dbReference type="GO" id="GO:0051287">
    <property type="term" value="F:NAD binding"/>
    <property type="evidence" value="ECO:0007669"/>
    <property type="project" value="InterPro"/>
</dbReference>
<dbReference type="GO" id="GO:0005975">
    <property type="term" value="P:carbohydrate metabolic process"/>
    <property type="evidence" value="ECO:0007669"/>
    <property type="project" value="InterPro"/>
</dbReference>
<dbReference type="GO" id="GO:0046167">
    <property type="term" value="P:glycerol-3-phosphate biosynthetic process"/>
    <property type="evidence" value="ECO:0007669"/>
    <property type="project" value="UniProtKB-UniRule"/>
</dbReference>
<dbReference type="GO" id="GO:0046168">
    <property type="term" value="P:glycerol-3-phosphate catabolic process"/>
    <property type="evidence" value="ECO:0007669"/>
    <property type="project" value="InterPro"/>
</dbReference>
<dbReference type="GO" id="GO:0006650">
    <property type="term" value="P:glycerophospholipid metabolic process"/>
    <property type="evidence" value="ECO:0007669"/>
    <property type="project" value="UniProtKB-UniRule"/>
</dbReference>
<dbReference type="GO" id="GO:0008654">
    <property type="term" value="P:phospholipid biosynthetic process"/>
    <property type="evidence" value="ECO:0007669"/>
    <property type="project" value="UniProtKB-KW"/>
</dbReference>
<dbReference type="FunFam" id="1.10.1040.10:FF:000001">
    <property type="entry name" value="Glycerol-3-phosphate dehydrogenase [NAD(P)+]"/>
    <property type="match status" value="1"/>
</dbReference>
<dbReference type="FunFam" id="3.40.50.720:FF:000019">
    <property type="entry name" value="Glycerol-3-phosphate dehydrogenase [NAD(P)+]"/>
    <property type="match status" value="1"/>
</dbReference>
<dbReference type="Gene3D" id="1.10.1040.10">
    <property type="entry name" value="N-(1-d-carboxylethyl)-l-norvaline Dehydrogenase, domain 2"/>
    <property type="match status" value="1"/>
</dbReference>
<dbReference type="Gene3D" id="3.40.50.720">
    <property type="entry name" value="NAD(P)-binding Rossmann-like Domain"/>
    <property type="match status" value="1"/>
</dbReference>
<dbReference type="HAMAP" id="MF_00394">
    <property type="entry name" value="NAD_Glyc3P_dehydrog"/>
    <property type="match status" value="1"/>
</dbReference>
<dbReference type="InterPro" id="IPR008927">
    <property type="entry name" value="6-PGluconate_DH-like_C_sf"/>
</dbReference>
<dbReference type="InterPro" id="IPR013328">
    <property type="entry name" value="6PGD_dom2"/>
</dbReference>
<dbReference type="InterPro" id="IPR006168">
    <property type="entry name" value="G3P_DH_NAD-dep"/>
</dbReference>
<dbReference type="InterPro" id="IPR006109">
    <property type="entry name" value="G3P_DH_NAD-dep_C"/>
</dbReference>
<dbReference type="InterPro" id="IPR011128">
    <property type="entry name" value="G3P_DH_NAD-dep_N"/>
</dbReference>
<dbReference type="InterPro" id="IPR036291">
    <property type="entry name" value="NAD(P)-bd_dom_sf"/>
</dbReference>
<dbReference type="NCBIfam" id="NF000940">
    <property type="entry name" value="PRK00094.1-2"/>
    <property type="match status" value="1"/>
</dbReference>
<dbReference type="NCBIfam" id="NF000941">
    <property type="entry name" value="PRK00094.1-3"/>
    <property type="match status" value="1"/>
</dbReference>
<dbReference type="NCBIfam" id="NF000942">
    <property type="entry name" value="PRK00094.1-4"/>
    <property type="match status" value="1"/>
</dbReference>
<dbReference type="PANTHER" id="PTHR11728">
    <property type="entry name" value="GLYCEROL-3-PHOSPHATE DEHYDROGENASE"/>
    <property type="match status" value="1"/>
</dbReference>
<dbReference type="PANTHER" id="PTHR11728:SF1">
    <property type="entry name" value="GLYCEROL-3-PHOSPHATE DEHYDROGENASE [NAD(+)] 2, CHLOROPLASTIC"/>
    <property type="match status" value="1"/>
</dbReference>
<dbReference type="Pfam" id="PF07479">
    <property type="entry name" value="NAD_Gly3P_dh_C"/>
    <property type="match status" value="1"/>
</dbReference>
<dbReference type="Pfam" id="PF01210">
    <property type="entry name" value="NAD_Gly3P_dh_N"/>
    <property type="match status" value="1"/>
</dbReference>
<dbReference type="PIRSF" id="PIRSF000114">
    <property type="entry name" value="Glycerol-3-P_dh"/>
    <property type="match status" value="1"/>
</dbReference>
<dbReference type="PRINTS" id="PR00077">
    <property type="entry name" value="GPDHDRGNASE"/>
</dbReference>
<dbReference type="SUPFAM" id="SSF48179">
    <property type="entry name" value="6-phosphogluconate dehydrogenase C-terminal domain-like"/>
    <property type="match status" value="1"/>
</dbReference>
<dbReference type="SUPFAM" id="SSF51735">
    <property type="entry name" value="NAD(P)-binding Rossmann-fold domains"/>
    <property type="match status" value="1"/>
</dbReference>
<dbReference type="PROSITE" id="PS00957">
    <property type="entry name" value="NAD_G3PDH"/>
    <property type="match status" value="1"/>
</dbReference>
<feature type="chain" id="PRO_0000137925" description="Glycerol-3-phosphate dehydrogenase [NAD(P)+]">
    <location>
        <begin position="1"/>
        <end position="340"/>
    </location>
</feature>
<feature type="active site" description="Proton acceptor" evidence="1">
    <location>
        <position position="193"/>
    </location>
</feature>
<feature type="binding site" evidence="1">
    <location>
        <position position="11"/>
    </location>
    <ligand>
        <name>NADPH</name>
        <dbReference type="ChEBI" id="CHEBI:57783"/>
    </ligand>
</feature>
<feature type="binding site" evidence="1">
    <location>
        <position position="12"/>
    </location>
    <ligand>
        <name>NADPH</name>
        <dbReference type="ChEBI" id="CHEBI:57783"/>
    </ligand>
</feature>
<feature type="binding site" evidence="1">
    <location>
        <position position="32"/>
    </location>
    <ligand>
        <name>NADPH</name>
        <dbReference type="ChEBI" id="CHEBI:57783"/>
    </ligand>
</feature>
<feature type="binding site" evidence="1">
    <location>
        <position position="33"/>
    </location>
    <ligand>
        <name>NADPH</name>
        <dbReference type="ChEBI" id="CHEBI:57783"/>
    </ligand>
</feature>
<feature type="binding site" evidence="1">
    <location>
        <position position="106"/>
    </location>
    <ligand>
        <name>NADPH</name>
        <dbReference type="ChEBI" id="CHEBI:57783"/>
    </ligand>
</feature>
<feature type="binding site" evidence="1">
    <location>
        <position position="106"/>
    </location>
    <ligand>
        <name>sn-glycerol 3-phosphate</name>
        <dbReference type="ChEBI" id="CHEBI:57597"/>
    </ligand>
</feature>
<feature type="binding site" evidence="1">
    <location>
        <position position="138"/>
    </location>
    <ligand>
        <name>sn-glycerol 3-phosphate</name>
        <dbReference type="ChEBI" id="CHEBI:57597"/>
    </ligand>
</feature>
<feature type="binding site" evidence="1">
    <location>
        <position position="140"/>
    </location>
    <ligand>
        <name>sn-glycerol 3-phosphate</name>
        <dbReference type="ChEBI" id="CHEBI:57597"/>
    </ligand>
</feature>
<feature type="binding site" evidence="1">
    <location>
        <position position="142"/>
    </location>
    <ligand>
        <name>NADPH</name>
        <dbReference type="ChEBI" id="CHEBI:57783"/>
    </ligand>
</feature>
<feature type="binding site" evidence="1">
    <location>
        <position position="193"/>
    </location>
    <ligand>
        <name>sn-glycerol 3-phosphate</name>
        <dbReference type="ChEBI" id="CHEBI:57597"/>
    </ligand>
</feature>
<feature type="binding site" evidence="1">
    <location>
        <position position="246"/>
    </location>
    <ligand>
        <name>sn-glycerol 3-phosphate</name>
        <dbReference type="ChEBI" id="CHEBI:57597"/>
    </ligand>
</feature>
<feature type="binding site" evidence="1">
    <location>
        <position position="256"/>
    </location>
    <ligand>
        <name>sn-glycerol 3-phosphate</name>
        <dbReference type="ChEBI" id="CHEBI:57597"/>
    </ligand>
</feature>
<feature type="binding site" evidence="1">
    <location>
        <position position="257"/>
    </location>
    <ligand>
        <name>NADPH</name>
        <dbReference type="ChEBI" id="CHEBI:57783"/>
    </ligand>
</feature>
<feature type="binding site" evidence="1">
    <location>
        <position position="257"/>
    </location>
    <ligand>
        <name>sn-glycerol 3-phosphate</name>
        <dbReference type="ChEBI" id="CHEBI:57597"/>
    </ligand>
</feature>
<feature type="binding site" evidence="1">
    <location>
        <position position="258"/>
    </location>
    <ligand>
        <name>sn-glycerol 3-phosphate</name>
        <dbReference type="ChEBI" id="CHEBI:57597"/>
    </ligand>
</feature>
<feature type="binding site" evidence="1">
    <location>
        <position position="281"/>
    </location>
    <ligand>
        <name>NADPH</name>
        <dbReference type="ChEBI" id="CHEBI:57783"/>
    </ligand>
</feature>
<feature type="binding site" evidence="1">
    <location>
        <position position="283"/>
    </location>
    <ligand>
        <name>NADPH</name>
        <dbReference type="ChEBI" id="CHEBI:57783"/>
    </ligand>
</feature>
<proteinExistence type="inferred from homology"/>
<sequence>MQKIAVIGAGSWGSALAMVLADNGHDVRLVGRRQEQMDELNERHTNESYLPNIELPTTIRGYTGMEEALGGVEAIVLVVPTKAMRETVRKIVPYLQKAVPVIHASKGIEPATHKRISEMIAEEDASTNRISSITVLSGPSHAEEVALRQPTTVTVASADDEAAKYTQNLFMNQQFRVYTNPDLIGVEIGGALKNIIALACGVTNGLGYGDNTKAAIMTRGLAEISRLGTTMGAKPLTFSGLSGLGDLIVTCTSVHSRNWRAGRMIGEGLSMDEVLEKMGMVVEGIRTTQAAYELSEKLEIDMPVTKALYSVLFNGIDPYQAAEELMGRVKRHEVESLYRS</sequence>
<protein>
    <recommendedName>
        <fullName evidence="1">Glycerol-3-phosphate dehydrogenase [NAD(P)+]</fullName>
        <ecNumber evidence="1">1.1.1.94</ecNumber>
    </recommendedName>
    <alternativeName>
        <fullName evidence="1">NAD(P)(+)-dependent glycerol-3-phosphate dehydrogenase</fullName>
    </alternativeName>
    <alternativeName>
        <fullName evidence="1">NAD(P)H-dependent dihydroxyacetone-phosphate reductase</fullName>
    </alternativeName>
</protein>
<organism>
    <name type="scientific">Shouchella clausii (strain KSM-K16)</name>
    <name type="common">Alkalihalobacillus clausii</name>
    <dbReference type="NCBI Taxonomy" id="66692"/>
    <lineage>
        <taxon>Bacteria</taxon>
        <taxon>Bacillati</taxon>
        <taxon>Bacillota</taxon>
        <taxon>Bacilli</taxon>
        <taxon>Bacillales</taxon>
        <taxon>Bacillaceae</taxon>
        <taxon>Shouchella</taxon>
    </lineage>
</organism>
<evidence type="ECO:0000255" key="1">
    <source>
        <dbReference type="HAMAP-Rule" id="MF_00394"/>
    </source>
</evidence>